<sequence length="334" mass="36785">MIEADRIISPNATLQEDSQDRAIRPKRLEDYVGQPQVREQMEIFINAARGRQEALDHTLIFGPPGLGKTTLANIIANEMDVSIKTTSGPVLEKAGDLAALLTNLEPKDVLFIDEIHRLSAAVEEVLYPAMEDYQLDIMIGEGPAARSIKLDLPPFTLVGATTRAGLLTSPLRDRFGIVQRLEFYSVEDLRHIVARSASLLGVSIDDGGAHEIARRSRGTPRIANRLLRRVRDYAEVKADGAITNEVADKALNMLNVDLHGFDHMDRRLLLAVMEKFDGGPVGVESLAAAIGEEKGTIEDVVEPYLIQQGFLMRTPRGRVATQAAYNHFGLTMPE</sequence>
<protein>
    <recommendedName>
        <fullName evidence="1">Holliday junction branch migration complex subunit RuvB</fullName>
        <ecNumber evidence="1">3.6.4.-</ecNumber>
    </recommendedName>
</protein>
<organism>
    <name type="scientific">Hahella chejuensis (strain KCTC 2396)</name>
    <dbReference type="NCBI Taxonomy" id="349521"/>
    <lineage>
        <taxon>Bacteria</taxon>
        <taxon>Pseudomonadati</taxon>
        <taxon>Pseudomonadota</taxon>
        <taxon>Gammaproteobacteria</taxon>
        <taxon>Oceanospirillales</taxon>
        <taxon>Hahellaceae</taxon>
        <taxon>Hahella</taxon>
    </lineage>
</organism>
<evidence type="ECO:0000255" key="1">
    <source>
        <dbReference type="HAMAP-Rule" id="MF_00016"/>
    </source>
</evidence>
<reference key="1">
    <citation type="journal article" date="2005" name="Nucleic Acids Res.">
        <title>Genomic blueprint of Hahella chejuensis, a marine microbe producing an algicidal agent.</title>
        <authorList>
            <person name="Jeong H."/>
            <person name="Yim J.H."/>
            <person name="Lee C."/>
            <person name="Choi S.-H."/>
            <person name="Park Y.K."/>
            <person name="Yoon S.H."/>
            <person name="Hur C.-G."/>
            <person name="Kang H.-Y."/>
            <person name="Kim D."/>
            <person name="Lee H.H."/>
            <person name="Park K.H."/>
            <person name="Park S.-H."/>
            <person name="Park H.-S."/>
            <person name="Lee H.K."/>
            <person name="Oh T.K."/>
            <person name="Kim J.F."/>
        </authorList>
    </citation>
    <scope>NUCLEOTIDE SEQUENCE [LARGE SCALE GENOMIC DNA]</scope>
    <source>
        <strain>KCTC 2396</strain>
    </source>
</reference>
<accession>Q2SCL3</accession>
<dbReference type="EC" id="3.6.4.-" evidence="1"/>
<dbReference type="EMBL" id="CP000155">
    <property type="protein sequence ID" value="ABC31611.1"/>
    <property type="molecule type" value="Genomic_DNA"/>
</dbReference>
<dbReference type="RefSeq" id="WP_011398676.1">
    <property type="nucleotide sequence ID" value="NC_007645.1"/>
</dbReference>
<dbReference type="SMR" id="Q2SCL3"/>
<dbReference type="STRING" id="349521.HCH_04922"/>
<dbReference type="KEGG" id="hch:HCH_04922"/>
<dbReference type="eggNOG" id="COG2255">
    <property type="taxonomic scope" value="Bacteria"/>
</dbReference>
<dbReference type="HOGENOM" id="CLU_055599_1_0_6"/>
<dbReference type="OrthoDB" id="9804478at2"/>
<dbReference type="Proteomes" id="UP000000238">
    <property type="component" value="Chromosome"/>
</dbReference>
<dbReference type="GO" id="GO:0005737">
    <property type="term" value="C:cytoplasm"/>
    <property type="evidence" value="ECO:0007669"/>
    <property type="project" value="UniProtKB-SubCell"/>
</dbReference>
<dbReference type="GO" id="GO:0048476">
    <property type="term" value="C:Holliday junction resolvase complex"/>
    <property type="evidence" value="ECO:0007669"/>
    <property type="project" value="UniProtKB-UniRule"/>
</dbReference>
<dbReference type="GO" id="GO:0005524">
    <property type="term" value="F:ATP binding"/>
    <property type="evidence" value="ECO:0007669"/>
    <property type="project" value="UniProtKB-UniRule"/>
</dbReference>
<dbReference type="GO" id="GO:0016887">
    <property type="term" value="F:ATP hydrolysis activity"/>
    <property type="evidence" value="ECO:0007669"/>
    <property type="project" value="InterPro"/>
</dbReference>
<dbReference type="GO" id="GO:0000400">
    <property type="term" value="F:four-way junction DNA binding"/>
    <property type="evidence" value="ECO:0007669"/>
    <property type="project" value="UniProtKB-UniRule"/>
</dbReference>
<dbReference type="GO" id="GO:0009378">
    <property type="term" value="F:four-way junction helicase activity"/>
    <property type="evidence" value="ECO:0007669"/>
    <property type="project" value="InterPro"/>
</dbReference>
<dbReference type="GO" id="GO:0006310">
    <property type="term" value="P:DNA recombination"/>
    <property type="evidence" value="ECO:0007669"/>
    <property type="project" value="UniProtKB-UniRule"/>
</dbReference>
<dbReference type="GO" id="GO:0006281">
    <property type="term" value="P:DNA repair"/>
    <property type="evidence" value="ECO:0007669"/>
    <property type="project" value="UniProtKB-UniRule"/>
</dbReference>
<dbReference type="CDD" id="cd00009">
    <property type="entry name" value="AAA"/>
    <property type="match status" value="1"/>
</dbReference>
<dbReference type="FunFam" id="1.10.10.10:FF:000086">
    <property type="entry name" value="Holliday junction ATP-dependent DNA helicase RuvB"/>
    <property type="match status" value="1"/>
</dbReference>
<dbReference type="FunFam" id="1.10.8.60:FF:000023">
    <property type="entry name" value="Holliday junction ATP-dependent DNA helicase RuvB"/>
    <property type="match status" value="1"/>
</dbReference>
<dbReference type="FunFam" id="3.40.50.300:FF:000073">
    <property type="entry name" value="Holliday junction ATP-dependent DNA helicase RuvB"/>
    <property type="match status" value="1"/>
</dbReference>
<dbReference type="Gene3D" id="1.10.8.60">
    <property type="match status" value="1"/>
</dbReference>
<dbReference type="Gene3D" id="3.40.50.300">
    <property type="entry name" value="P-loop containing nucleotide triphosphate hydrolases"/>
    <property type="match status" value="1"/>
</dbReference>
<dbReference type="Gene3D" id="1.10.10.10">
    <property type="entry name" value="Winged helix-like DNA-binding domain superfamily/Winged helix DNA-binding domain"/>
    <property type="match status" value="1"/>
</dbReference>
<dbReference type="HAMAP" id="MF_00016">
    <property type="entry name" value="DNA_HJ_migration_RuvB"/>
    <property type="match status" value="1"/>
</dbReference>
<dbReference type="InterPro" id="IPR003593">
    <property type="entry name" value="AAA+_ATPase"/>
</dbReference>
<dbReference type="InterPro" id="IPR041445">
    <property type="entry name" value="AAA_lid_4"/>
</dbReference>
<dbReference type="InterPro" id="IPR004605">
    <property type="entry name" value="DNA_helicase_Holl-junc_RuvB"/>
</dbReference>
<dbReference type="InterPro" id="IPR027417">
    <property type="entry name" value="P-loop_NTPase"/>
</dbReference>
<dbReference type="InterPro" id="IPR008824">
    <property type="entry name" value="RuvB-like_N"/>
</dbReference>
<dbReference type="InterPro" id="IPR008823">
    <property type="entry name" value="RuvB_C"/>
</dbReference>
<dbReference type="InterPro" id="IPR036388">
    <property type="entry name" value="WH-like_DNA-bd_sf"/>
</dbReference>
<dbReference type="InterPro" id="IPR036390">
    <property type="entry name" value="WH_DNA-bd_sf"/>
</dbReference>
<dbReference type="NCBIfam" id="NF000868">
    <property type="entry name" value="PRK00080.1"/>
    <property type="match status" value="1"/>
</dbReference>
<dbReference type="NCBIfam" id="TIGR00635">
    <property type="entry name" value="ruvB"/>
    <property type="match status" value="1"/>
</dbReference>
<dbReference type="PANTHER" id="PTHR42848">
    <property type="match status" value="1"/>
</dbReference>
<dbReference type="PANTHER" id="PTHR42848:SF1">
    <property type="entry name" value="HOLLIDAY JUNCTION BRANCH MIGRATION COMPLEX SUBUNIT RUVB"/>
    <property type="match status" value="1"/>
</dbReference>
<dbReference type="Pfam" id="PF17864">
    <property type="entry name" value="AAA_lid_4"/>
    <property type="match status" value="1"/>
</dbReference>
<dbReference type="Pfam" id="PF05491">
    <property type="entry name" value="RuvB_C"/>
    <property type="match status" value="1"/>
</dbReference>
<dbReference type="Pfam" id="PF05496">
    <property type="entry name" value="RuvB_N"/>
    <property type="match status" value="1"/>
</dbReference>
<dbReference type="SMART" id="SM00382">
    <property type="entry name" value="AAA"/>
    <property type="match status" value="1"/>
</dbReference>
<dbReference type="SUPFAM" id="SSF52540">
    <property type="entry name" value="P-loop containing nucleoside triphosphate hydrolases"/>
    <property type="match status" value="1"/>
</dbReference>
<dbReference type="SUPFAM" id="SSF46785">
    <property type="entry name" value="Winged helix' DNA-binding domain"/>
    <property type="match status" value="1"/>
</dbReference>
<feature type="chain" id="PRO_0000235373" description="Holliday junction branch migration complex subunit RuvB">
    <location>
        <begin position="1"/>
        <end position="334"/>
    </location>
</feature>
<feature type="region of interest" description="Large ATPase domain (RuvB-L)" evidence="1">
    <location>
        <begin position="4"/>
        <end position="184"/>
    </location>
</feature>
<feature type="region of interest" description="Small ATPAse domain (RuvB-S)" evidence="1">
    <location>
        <begin position="185"/>
        <end position="255"/>
    </location>
</feature>
<feature type="region of interest" description="Head domain (RuvB-H)" evidence="1">
    <location>
        <begin position="258"/>
        <end position="334"/>
    </location>
</feature>
<feature type="binding site" evidence="1">
    <location>
        <position position="23"/>
    </location>
    <ligand>
        <name>ATP</name>
        <dbReference type="ChEBI" id="CHEBI:30616"/>
    </ligand>
</feature>
<feature type="binding site" evidence="1">
    <location>
        <position position="24"/>
    </location>
    <ligand>
        <name>ATP</name>
        <dbReference type="ChEBI" id="CHEBI:30616"/>
    </ligand>
</feature>
<feature type="binding site" evidence="1">
    <location>
        <position position="65"/>
    </location>
    <ligand>
        <name>ATP</name>
        <dbReference type="ChEBI" id="CHEBI:30616"/>
    </ligand>
</feature>
<feature type="binding site" evidence="1">
    <location>
        <position position="68"/>
    </location>
    <ligand>
        <name>ATP</name>
        <dbReference type="ChEBI" id="CHEBI:30616"/>
    </ligand>
</feature>
<feature type="binding site" evidence="1">
    <location>
        <position position="69"/>
    </location>
    <ligand>
        <name>ATP</name>
        <dbReference type="ChEBI" id="CHEBI:30616"/>
    </ligand>
</feature>
<feature type="binding site" evidence="1">
    <location>
        <position position="69"/>
    </location>
    <ligand>
        <name>Mg(2+)</name>
        <dbReference type="ChEBI" id="CHEBI:18420"/>
    </ligand>
</feature>
<feature type="binding site" evidence="1">
    <location>
        <position position="70"/>
    </location>
    <ligand>
        <name>ATP</name>
        <dbReference type="ChEBI" id="CHEBI:30616"/>
    </ligand>
</feature>
<feature type="binding site" evidence="1">
    <location>
        <begin position="131"/>
        <end position="133"/>
    </location>
    <ligand>
        <name>ATP</name>
        <dbReference type="ChEBI" id="CHEBI:30616"/>
    </ligand>
</feature>
<feature type="binding site" evidence="1">
    <location>
        <position position="174"/>
    </location>
    <ligand>
        <name>ATP</name>
        <dbReference type="ChEBI" id="CHEBI:30616"/>
    </ligand>
</feature>
<feature type="binding site" evidence="1">
    <location>
        <position position="184"/>
    </location>
    <ligand>
        <name>ATP</name>
        <dbReference type="ChEBI" id="CHEBI:30616"/>
    </ligand>
</feature>
<feature type="binding site" evidence="1">
    <location>
        <position position="221"/>
    </location>
    <ligand>
        <name>ATP</name>
        <dbReference type="ChEBI" id="CHEBI:30616"/>
    </ligand>
</feature>
<feature type="binding site" evidence="1">
    <location>
        <position position="313"/>
    </location>
    <ligand>
        <name>DNA</name>
        <dbReference type="ChEBI" id="CHEBI:16991"/>
    </ligand>
</feature>
<feature type="binding site" evidence="1">
    <location>
        <position position="318"/>
    </location>
    <ligand>
        <name>DNA</name>
        <dbReference type="ChEBI" id="CHEBI:16991"/>
    </ligand>
</feature>
<gene>
    <name evidence="1" type="primary">ruvB</name>
    <name type="ordered locus">HCH_04922</name>
</gene>
<keyword id="KW-0067">ATP-binding</keyword>
<keyword id="KW-0963">Cytoplasm</keyword>
<keyword id="KW-0227">DNA damage</keyword>
<keyword id="KW-0233">DNA recombination</keyword>
<keyword id="KW-0234">DNA repair</keyword>
<keyword id="KW-0238">DNA-binding</keyword>
<keyword id="KW-0378">Hydrolase</keyword>
<keyword id="KW-0547">Nucleotide-binding</keyword>
<keyword id="KW-1185">Reference proteome</keyword>
<comment type="function">
    <text evidence="1">The RuvA-RuvB-RuvC complex processes Holliday junction (HJ) DNA during genetic recombination and DNA repair, while the RuvA-RuvB complex plays an important role in the rescue of blocked DNA replication forks via replication fork reversal (RFR). RuvA specifically binds to HJ cruciform DNA, conferring on it an open structure. The RuvB hexamer acts as an ATP-dependent pump, pulling dsDNA into and through the RuvAB complex. RuvB forms 2 homohexamers on either side of HJ DNA bound by 1 or 2 RuvA tetramers; 4 subunits per hexamer contact DNA at a time. Coordinated motions by a converter formed by DNA-disengaged RuvB subunits stimulates ATP hydrolysis and nucleotide exchange. Immobilization of the converter enables RuvB to convert the ATP-contained energy into a lever motion, pulling 2 nucleotides of DNA out of the RuvA tetramer per ATP hydrolyzed, thus driving DNA branch migration. The RuvB motors rotate together with the DNA substrate, which together with the progressing nucleotide cycle form the mechanistic basis for DNA recombination by continuous HJ branch migration. Branch migration allows RuvC to scan DNA until it finds its consensus sequence, where it cleaves and resolves cruciform DNA.</text>
</comment>
<comment type="catalytic activity">
    <reaction evidence="1">
        <text>ATP + H2O = ADP + phosphate + H(+)</text>
        <dbReference type="Rhea" id="RHEA:13065"/>
        <dbReference type="ChEBI" id="CHEBI:15377"/>
        <dbReference type="ChEBI" id="CHEBI:15378"/>
        <dbReference type="ChEBI" id="CHEBI:30616"/>
        <dbReference type="ChEBI" id="CHEBI:43474"/>
        <dbReference type="ChEBI" id="CHEBI:456216"/>
    </reaction>
</comment>
<comment type="subunit">
    <text evidence="1">Homohexamer. Forms an RuvA(8)-RuvB(12)-Holliday junction (HJ) complex. HJ DNA is sandwiched between 2 RuvA tetramers; dsDNA enters through RuvA and exits via RuvB. An RuvB hexamer assembles on each DNA strand where it exits the tetramer. Each RuvB hexamer is contacted by two RuvA subunits (via domain III) on 2 adjacent RuvB subunits; this complex drives branch migration. In the full resolvosome a probable DNA-RuvA(4)-RuvB(12)-RuvC(2) complex forms which resolves the HJ.</text>
</comment>
<comment type="subcellular location">
    <subcellularLocation>
        <location evidence="1">Cytoplasm</location>
    </subcellularLocation>
</comment>
<comment type="domain">
    <text evidence="1">Has 3 domains, the large (RuvB-L) and small ATPase (RuvB-S) domains and the C-terminal head (RuvB-H) domain. The head domain binds DNA, while the ATPase domains jointly bind ATP, ADP or are empty depending on the state of the subunit in the translocation cycle. During a single DNA translocation step the structure of each domain remains the same, but their relative positions change.</text>
</comment>
<comment type="similarity">
    <text evidence="1">Belongs to the RuvB family.</text>
</comment>
<proteinExistence type="inferred from homology"/>
<name>RUVB_HAHCH</name>